<feature type="chain" id="PRO_0000399613" description="Respiratory supercomplex factor 1, mitochondrial">
    <location>
        <begin position="1"/>
        <end position="148"/>
    </location>
</feature>
<feature type="transmembrane region" description="Helical" evidence="3">
    <location>
        <begin position="36"/>
        <end position="53"/>
    </location>
</feature>
<feature type="transmembrane region" description="Helical" evidence="3">
    <location>
        <begin position="72"/>
        <end position="89"/>
    </location>
</feature>
<feature type="domain" description="HIG1" evidence="3">
    <location>
        <begin position="9"/>
        <end position="100"/>
    </location>
</feature>
<feature type="coiled-coil region" evidence="2">
    <location>
        <begin position="89"/>
        <end position="148"/>
    </location>
</feature>
<sequence>MPNIDNTPLPSSFDAHPEFFQETKWQKVTRRLKEEPLIPIGYAATSYALWRAYKSMKARDSVELNRMFRARIYGHAFTLFAIVAGGIYYGQERKQRKEFEKALQEKQDQEKRDAWLRELEVRDKEDKDWRQRHAAMEMAAKEAEKKMG</sequence>
<name>RCF1_BLAGS</name>
<keyword id="KW-0175">Coiled coil</keyword>
<keyword id="KW-0472">Membrane</keyword>
<keyword id="KW-0496">Mitochondrion</keyword>
<keyword id="KW-1185">Reference proteome</keyword>
<keyword id="KW-0812">Transmembrane</keyword>
<keyword id="KW-1133">Transmembrane helix</keyword>
<dbReference type="EMBL" id="GG657450">
    <property type="protein sequence ID" value="OAT06132.1"/>
    <property type="molecule type" value="Genomic_DNA"/>
</dbReference>
<dbReference type="RefSeq" id="XP_002627741.1">
    <property type="nucleotide sequence ID" value="XM_002627695.1"/>
</dbReference>
<dbReference type="SMR" id="C5JIT3"/>
<dbReference type="STRING" id="559298.C5JIT3"/>
<dbReference type="GeneID" id="8506789"/>
<dbReference type="KEGG" id="bgh:BDBG_02412"/>
<dbReference type="VEuPathDB" id="FungiDB:BDBG_02412"/>
<dbReference type="HOGENOM" id="CLU_087356_0_2_1"/>
<dbReference type="OrthoDB" id="6604018at2759"/>
<dbReference type="Proteomes" id="UP000002038">
    <property type="component" value="Unassembled WGS sequence"/>
</dbReference>
<dbReference type="GO" id="GO:0031966">
    <property type="term" value="C:mitochondrial membrane"/>
    <property type="evidence" value="ECO:0007669"/>
    <property type="project" value="UniProtKB-SubCell"/>
</dbReference>
<dbReference type="GO" id="GO:0097250">
    <property type="term" value="P:mitochondrial respirasome assembly"/>
    <property type="evidence" value="ECO:0007669"/>
    <property type="project" value="TreeGrafter"/>
</dbReference>
<dbReference type="InterPro" id="IPR007667">
    <property type="entry name" value="Hypoxia_induced_domain"/>
</dbReference>
<dbReference type="InterPro" id="IPR050355">
    <property type="entry name" value="RCF1"/>
</dbReference>
<dbReference type="PANTHER" id="PTHR12297:SF3">
    <property type="entry name" value="HIG1 DOMAIN FAMILY MEMBER 1A"/>
    <property type="match status" value="1"/>
</dbReference>
<dbReference type="PANTHER" id="PTHR12297">
    <property type="entry name" value="HYPOXIA-INDUCBILE GENE 1 HIG1 -RELATED"/>
    <property type="match status" value="1"/>
</dbReference>
<dbReference type="Pfam" id="PF04588">
    <property type="entry name" value="HIG_1_N"/>
    <property type="match status" value="1"/>
</dbReference>
<dbReference type="PROSITE" id="PS51503">
    <property type="entry name" value="HIG1"/>
    <property type="match status" value="1"/>
</dbReference>
<proteinExistence type="inferred from homology"/>
<reference key="1">
    <citation type="journal article" date="2015" name="PLoS Genet.">
        <title>The dynamic genome and transcriptome of the human fungal pathogen Blastomyces and close relative Emmonsia.</title>
        <authorList>
            <person name="Munoz J.F."/>
            <person name="Gauthier G.M."/>
            <person name="Desjardins C.A."/>
            <person name="Gallo J.E."/>
            <person name="Holder J."/>
            <person name="Sullivan T.D."/>
            <person name="Marty A.J."/>
            <person name="Carmen J.C."/>
            <person name="Chen Z."/>
            <person name="Ding L."/>
            <person name="Gujja S."/>
            <person name="Magrini V."/>
            <person name="Misas E."/>
            <person name="Mitreva M."/>
            <person name="Priest M."/>
            <person name="Saif S."/>
            <person name="Whiston E.A."/>
            <person name="Young S."/>
            <person name="Zeng Q."/>
            <person name="Goldman W.E."/>
            <person name="Mardis E.R."/>
            <person name="Taylor J.W."/>
            <person name="McEwen J.G."/>
            <person name="Clay O.K."/>
            <person name="Klein B.S."/>
            <person name="Cuomo C.A."/>
        </authorList>
    </citation>
    <scope>NUCLEOTIDE SEQUENCE [LARGE SCALE GENOMIC DNA]</scope>
    <source>
        <strain>SLH14081</strain>
    </source>
</reference>
<organism>
    <name type="scientific">Blastomyces gilchristii (strain SLH14081)</name>
    <name type="common">Blastomyces dermatitidis</name>
    <dbReference type="NCBI Taxonomy" id="559298"/>
    <lineage>
        <taxon>Eukaryota</taxon>
        <taxon>Fungi</taxon>
        <taxon>Dikarya</taxon>
        <taxon>Ascomycota</taxon>
        <taxon>Pezizomycotina</taxon>
        <taxon>Eurotiomycetes</taxon>
        <taxon>Eurotiomycetidae</taxon>
        <taxon>Onygenales</taxon>
        <taxon>Ajellomycetaceae</taxon>
        <taxon>Blastomyces</taxon>
    </lineage>
</organism>
<comment type="function">
    <text evidence="1">Cytochrome c oxidase subunit which plays a role in assembly of respiratory supercomplexes.</text>
</comment>
<comment type="subunit">
    <text evidence="1">Associates with the respiratory chain complex III/complex IV supercomplex.</text>
</comment>
<comment type="subcellular location">
    <subcellularLocation>
        <location evidence="3">Mitochondrion membrane</location>
        <topology evidence="3">Multi-pass membrane protein</topology>
    </subcellularLocation>
</comment>
<comment type="similarity">
    <text evidence="4">Belongs to the RCF1 family.</text>
</comment>
<gene>
    <name type="primary">RCF1</name>
    <name type="synonym">AIM31</name>
    <name type="ORF">BDBG_02412</name>
</gene>
<evidence type="ECO:0000250" key="1"/>
<evidence type="ECO:0000255" key="2"/>
<evidence type="ECO:0000255" key="3">
    <source>
        <dbReference type="PROSITE-ProRule" id="PRU00836"/>
    </source>
</evidence>
<evidence type="ECO:0000305" key="4"/>
<accession>C5JIT3</accession>
<accession>A0A179UI28</accession>
<protein>
    <recommendedName>
        <fullName>Respiratory supercomplex factor 1, mitochondrial</fullName>
    </recommendedName>
</protein>